<sequence>MVKAVAVLSNSNEVSGTINFSQEGNGPTTVTGTLAGLKPGLHGFHIHALGDTTNGCISTGPHFNPNGKEHGAPEDETRHAGDLGNINVGDDGTVSFTITDNHIPLTGTNSIIGRAVVVHADPDDLGKGGHELSKTTGNAGGRVACGIIGLQG</sequence>
<protein>
    <recommendedName>
        <fullName>Superoxide dismutase [Cu-Zn]</fullName>
        <ecNumber>1.15.1.1</ecNumber>
    </recommendedName>
</protein>
<dbReference type="EC" id="1.15.1.1"/>
<dbReference type="EMBL" id="M63003">
    <property type="protein sequence ID" value="AAA33659.1"/>
    <property type="molecule type" value="mRNA"/>
</dbReference>
<dbReference type="PIR" id="T06570">
    <property type="entry name" value="T06570"/>
</dbReference>
<dbReference type="SMR" id="Q02610"/>
<dbReference type="EnsemblPlants" id="Psat3g008560.1">
    <property type="protein sequence ID" value="Psat3g008560.1.cds"/>
    <property type="gene ID" value="Psat3g008560"/>
</dbReference>
<dbReference type="EnsemblPlants" id="Psat3g008560.2">
    <property type="protein sequence ID" value="Psat3g008560.2.cds"/>
    <property type="gene ID" value="Psat3g008560"/>
</dbReference>
<dbReference type="EnsemblPlants" id="Psat3g008560.3">
    <property type="protein sequence ID" value="Psat3g008560.3.cds"/>
    <property type="gene ID" value="Psat3g008560"/>
</dbReference>
<dbReference type="EnsemblPlants" id="Psat3g008560.4">
    <property type="protein sequence ID" value="Psat3g008560.4.cds"/>
    <property type="gene ID" value="Psat3g008560"/>
</dbReference>
<dbReference type="EnsemblPlants" id="Psat3g008560.6">
    <property type="protein sequence ID" value="Psat3g008560.6.cds"/>
    <property type="gene ID" value="Psat3g008560"/>
</dbReference>
<dbReference type="Gramene" id="Psat3g008560.1">
    <property type="protein sequence ID" value="Psat3g008560.1.cds"/>
    <property type="gene ID" value="Psat3g008560"/>
</dbReference>
<dbReference type="Gramene" id="Psat3g008560.2">
    <property type="protein sequence ID" value="Psat3g008560.2.cds"/>
    <property type="gene ID" value="Psat3g008560"/>
</dbReference>
<dbReference type="Gramene" id="Psat3g008560.3">
    <property type="protein sequence ID" value="Psat3g008560.3.cds"/>
    <property type="gene ID" value="Psat3g008560"/>
</dbReference>
<dbReference type="Gramene" id="Psat3g008560.4">
    <property type="protein sequence ID" value="Psat3g008560.4.cds"/>
    <property type="gene ID" value="Psat3g008560"/>
</dbReference>
<dbReference type="Gramene" id="Psat3g008560.6">
    <property type="protein sequence ID" value="Psat3g008560.6.cds"/>
    <property type="gene ID" value="Psat3g008560"/>
</dbReference>
<dbReference type="OrthoDB" id="2015551at2759"/>
<dbReference type="GO" id="GO:0005737">
    <property type="term" value="C:cytoplasm"/>
    <property type="evidence" value="ECO:0007669"/>
    <property type="project" value="UniProtKB-SubCell"/>
</dbReference>
<dbReference type="GO" id="GO:0005507">
    <property type="term" value="F:copper ion binding"/>
    <property type="evidence" value="ECO:0007669"/>
    <property type="project" value="InterPro"/>
</dbReference>
<dbReference type="GO" id="GO:0004784">
    <property type="term" value="F:superoxide dismutase activity"/>
    <property type="evidence" value="ECO:0007669"/>
    <property type="project" value="UniProtKB-EC"/>
</dbReference>
<dbReference type="CDD" id="cd00305">
    <property type="entry name" value="Cu-Zn_Superoxide_Dismutase"/>
    <property type="match status" value="1"/>
</dbReference>
<dbReference type="FunFam" id="2.60.40.200:FF:000001">
    <property type="entry name" value="Superoxide dismutase [Cu-Zn]"/>
    <property type="match status" value="1"/>
</dbReference>
<dbReference type="Gene3D" id="2.60.40.200">
    <property type="entry name" value="Superoxide dismutase, copper/zinc binding domain"/>
    <property type="match status" value="1"/>
</dbReference>
<dbReference type="InterPro" id="IPR036423">
    <property type="entry name" value="SOD-like_Cu/Zn_dom_sf"/>
</dbReference>
<dbReference type="InterPro" id="IPR024134">
    <property type="entry name" value="SOD_Cu/Zn_/chaperone"/>
</dbReference>
<dbReference type="InterPro" id="IPR018152">
    <property type="entry name" value="SOD_Cu/Zn_BS"/>
</dbReference>
<dbReference type="InterPro" id="IPR001424">
    <property type="entry name" value="SOD_Cu_Zn_dom"/>
</dbReference>
<dbReference type="PANTHER" id="PTHR10003">
    <property type="entry name" value="SUPEROXIDE DISMUTASE CU-ZN -RELATED"/>
    <property type="match status" value="1"/>
</dbReference>
<dbReference type="Pfam" id="PF00080">
    <property type="entry name" value="Sod_Cu"/>
    <property type="match status" value="1"/>
</dbReference>
<dbReference type="PRINTS" id="PR00068">
    <property type="entry name" value="CUZNDISMTASE"/>
</dbReference>
<dbReference type="SUPFAM" id="SSF49329">
    <property type="entry name" value="Cu,Zn superoxide dismutase-like"/>
    <property type="match status" value="1"/>
</dbReference>
<dbReference type="PROSITE" id="PS00087">
    <property type="entry name" value="SOD_CU_ZN_1"/>
    <property type="match status" value="1"/>
</dbReference>
<dbReference type="PROSITE" id="PS00332">
    <property type="entry name" value="SOD_CU_ZN_2"/>
    <property type="match status" value="1"/>
</dbReference>
<keyword id="KW-0049">Antioxidant</keyword>
<keyword id="KW-0186">Copper</keyword>
<keyword id="KW-0963">Cytoplasm</keyword>
<keyword id="KW-1015">Disulfide bond</keyword>
<keyword id="KW-0479">Metal-binding</keyword>
<keyword id="KW-0560">Oxidoreductase</keyword>
<keyword id="KW-0862">Zinc</keyword>
<organism>
    <name type="scientific">Pisum sativum</name>
    <name type="common">Garden pea</name>
    <name type="synonym">Lathyrus oleraceus</name>
    <dbReference type="NCBI Taxonomy" id="3888"/>
    <lineage>
        <taxon>Eukaryota</taxon>
        <taxon>Viridiplantae</taxon>
        <taxon>Streptophyta</taxon>
        <taxon>Embryophyta</taxon>
        <taxon>Tracheophyta</taxon>
        <taxon>Spermatophyta</taxon>
        <taxon>Magnoliopsida</taxon>
        <taxon>eudicotyledons</taxon>
        <taxon>Gunneridae</taxon>
        <taxon>Pentapetalae</taxon>
        <taxon>rosids</taxon>
        <taxon>fabids</taxon>
        <taxon>Fabales</taxon>
        <taxon>Fabaceae</taxon>
        <taxon>Papilionoideae</taxon>
        <taxon>50 kb inversion clade</taxon>
        <taxon>NPAAA clade</taxon>
        <taxon>Hologalegina</taxon>
        <taxon>IRL clade</taxon>
        <taxon>Fabeae</taxon>
        <taxon>Pisum</taxon>
    </lineage>
</organism>
<gene>
    <name type="primary">SODCC</name>
</gene>
<feature type="initiator methionine" description="Removed" evidence="1">
    <location>
        <position position="1"/>
    </location>
</feature>
<feature type="chain" id="PRO_0000164152" description="Superoxide dismutase [Cu-Zn]">
    <location>
        <begin position="2"/>
        <end position="152"/>
    </location>
</feature>
<feature type="binding site" evidence="1">
    <location>
        <position position="45"/>
    </location>
    <ligand>
        <name>Cu cation</name>
        <dbReference type="ChEBI" id="CHEBI:23378"/>
        <note>catalytic</note>
    </ligand>
</feature>
<feature type="binding site" evidence="1">
    <location>
        <position position="47"/>
    </location>
    <ligand>
        <name>Cu cation</name>
        <dbReference type="ChEBI" id="CHEBI:23378"/>
        <note>catalytic</note>
    </ligand>
</feature>
<feature type="binding site" evidence="1">
    <location>
        <position position="62"/>
    </location>
    <ligand>
        <name>Cu cation</name>
        <dbReference type="ChEBI" id="CHEBI:23378"/>
        <note>catalytic</note>
    </ligand>
</feature>
<feature type="binding site" evidence="1">
    <location>
        <position position="62"/>
    </location>
    <ligand>
        <name>Zn(2+)</name>
        <dbReference type="ChEBI" id="CHEBI:29105"/>
        <note>structural</note>
    </ligand>
</feature>
<feature type="binding site" evidence="1">
    <location>
        <position position="70"/>
    </location>
    <ligand>
        <name>Zn(2+)</name>
        <dbReference type="ChEBI" id="CHEBI:29105"/>
        <note>structural</note>
    </ligand>
</feature>
<feature type="binding site" evidence="1">
    <location>
        <position position="79"/>
    </location>
    <ligand>
        <name>Zn(2+)</name>
        <dbReference type="ChEBI" id="CHEBI:29105"/>
        <note>structural</note>
    </ligand>
</feature>
<feature type="binding site" evidence="1">
    <location>
        <position position="82"/>
    </location>
    <ligand>
        <name>Zn(2+)</name>
        <dbReference type="ChEBI" id="CHEBI:29105"/>
        <note>structural</note>
    </ligand>
</feature>
<feature type="binding site" evidence="1">
    <location>
        <position position="119"/>
    </location>
    <ligand>
        <name>Cu cation</name>
        <dbReference type="ChEBI" id="CHEBI:23378"/>
        <note>catalytic</note>
    </ligand>
</feature>
<feature type="disulfide bond" evidence="1">
    <location>
        <begin position="56"/>
        <end position="145"/>
    </location>
</feature>
<accession>Q02610</accession>
<name>SODC_PEA</name>
<evidence type="ECO:0000250" key="1"/>
<evidence type="ECO:0000305" key="2"/>
<comment type="function">
    <text>Destroys radicals which are normally produced within the cells and which are toxic to biological systems.</text>
</comment>
<comment type="catalytic activity">
    <reaction>
        <text>2 superoxide + 2 H(+) = H2O2 + O2</text>
        <dbReference type="Rhea" id="RHEA:20696"/>
        <dbReference type="ChEBI" id="CHEBI:15378"/>
        <dbReference type="ChEBI" id="CHEBI:15379"/>
        <dbReference type="ChEBI" id="CHEBI:16240"/>
        <dbReference type="ChEBI" id="CHEBI:18421"/>
        <dbReference type="EC" id="1.15.1.1"/>
    </reaction>
</comment>
<comment type="cofactor">
    <cofactor evidence="1">
        <name>Cu cation</name>
        <dbReference type="ChEBI" id="CHEBI:23378"/>
    </cofactor>
    <text evidence="1">Binds 1 copper ion per subunit.</text>
</comment>
<comment type="cofactor">
    <cofactor evidence="1">
        <name>Zn(2+)</name>
        <dbReference type="ChEBI" id="CHEBI:29105"/>
    </cofactor>
    <text evidence="1">Binds 1 zinc ion per subunit.</text>
</comment>
<comment type="subunit">
    <text>Homodimer.</text>
</comment>
<comment type="subcellular location">
    <subcellularLocation>
        <location>Cytoplasm</location>
    </subcellularLocation>
</comment>
<comment type="similarity">
    <text evidence="2">Belongs to the Cu-Zn superoxide dismutase family.</text>
</comment>
<reference key="1">
    <citation type="journal article" date="1991" name="Plant Physiol.">
        <title>Nucleotide sequence of a complementary DNA encoding pea cytosolic copper/zinc superoxide dismutase.</title>
        <authorList>
            <person name="White D.A."/>
            <person name="Zilinskas B.A."/>
        </authorList>
    </citation>
    <scope>NUCLEOTIDE SEQUENCE [MRNA]</scope>
</reference>
<proteinExistence type="evidence at transcript level"/>